<keyword id="KW-1185">Reference proteome</keyword>
<organism>
    <name type="scientific">Bacillus cereus (strain ATCC 14579 / DSM 31 / CCUG 7414 / JCM 2152 / NBRC 15305 / NCIMB 9373 / NCTC 2599 / NRRL B-3711)</name>
    <dbReference type="NCBI Taxonomy" id="226900"/>
    <lineage>
        <taxon>Bacteria</taxon>
        <taxon>Bacillati</taxon>
        <taxon>Bacillota</taxon>
        <taxon>Bacilli</taxon>
        <taxon>Bacillales</taxon>
        <taxon>Bacillaceae</taxon>
        <taxon>Bacillus</taxon>
        <taxon>Bacillus cereus group</taxon>
    </lineage>
</organism>
<accession>Q812N6</accession>
<name>Y4690_BACCR</name>
<feature type="chain" id="PRO_0000171095" description="UPF0354 protein BC_4690">
    <location>
        <begin position="1"/>
        <end position="270"/>
    </location>
</feature>
<reference key="1">
    <citation type="journal article" date="2003" name="Nature">
        <title>Genome sequence of Bacillus cereus and comparative analysis with Bacillus anthracis.</title>
        <authorList>
            <person name="Ivanova N."/>
            <person name="Sorokin A."/>
            <person name="Anderson I."/>
            <person name="Galleron N."/>
            <person name="Candelon B."/>
            <person name="Kapatral V."/>
            <person name="Bhattacharyya A."/>
            <person name="Reznik G."/>
            <person name="Mikhailova N."/>
            <person name="Lapidus A."/>
            <person name="Chu L."/>
            <person name="Mazur M."/>
            <person name="Goltsman E."/>
            <person name="Larsen N."/>
            <person name="D'Souza M."/>
            <person name="Walunas T."/>
            <person name="Grechkin Y."/>
            <person name="Pusch G."/>
            <person name="Haselkorn R."/>
            <person name="Fonstein M."/>
            <person name="Ehrlich S.D."/>
            <person name="Overbeek R."/>
            <person name="Kyrpides N.C."/>
        </authorList>
    </citation>
    <scope>NUCLEOTIDE SEQUENCE [LARGE SCALE GENOMIC DNA]</scope>
    <source>
        <strain>ATCC 14579 / DSM 31 / CCUG 7414 / JCM 2152 / NBRC 15305 / NCIMB 9373 / NCTC 2599 / NRRL B-3711</strain>
    </source>
</reference>
<comment type="similarity">
    <text evidence="1">Belongs to the UPF0354 family.</text>
</comment>
<comment type="sequence caution" evidence="2">
    <conflict type="erroneous initiation">
        <sequence resource="EMBL-CDS" id="AAP11597"/>
    </conflict>
</comment>
<gene>
    <name type="ordered locus">BC_4690</name>
</gene>
<proteinExistence type="inferred from homology"/>
<sequence>MKMTSKKMKDELIKKLSRPEWDFQYDSEKEVLRIEQKDSKKGINVSLPGVVAKWEVNKEKAIEEVAYYVQEALIAMHKEENSGAKILPVIRSTSFPKQAEEGNPFIMTDHTAETRIYYALDSNKTYRLIDERLLQKLELTEQQVREMALFNARSLGYEFKQDTVAGNTFYFLNTNDGYDATRILNESLLQSMREKISGDMVVAVPHQDVLIIADIVNEIGYDIIAQMTMKFFAEGHVPITSLSFVYEDGEFEPIFILAKNRKKTDGKEKG</sequence>
<protein>
    <recommendedName>
        <fullName evidence="1">UPF0354 protein BC_4690</fullName>
    </recommendedName>
</protein>
<dbReference type="EMBL" id="AE016877">
    <property type="protein sequence ID" value="AAP11597.1"/>
    <property type="status" value="ALT_INIT"/>
    <property type="molecule type" value="Genomic_DNA"/>
</dbReference>
<dbReference type="RefSeq" id="NP_834396.1">
    <property type="nucleotide sequence ID" value="NC_004722.1"/>
</dbReference>
<dbReference type="RefSeq" id="WP_000784588.1">
    <property type="nucleotide sequence ID" value="NZ_CP138336.1"/>
</dbReference>
<dbReference type="STRING" id="226900.BC_4690"/>
<dbReference type="DNASU" id="1207035"/>
<dbReference type="KEGG" id="bce:BC4690"/>
<dbReference type="PATRIC" id="fig|226900.8.peg.4853"/>
<dbReference type="HOGENOM" id="CLU_085634_0_0_9"/>
<dbReference type="OrthoDB" id="154553at2"/>
<dbReference type="Proteomes" id="UP000001417">
    <property type="component" value="Chromosome"/>
</dbReference>
<dbReference type="HAMAP" id="MF_01548">
    <property type="entry name" value="UPF0354"/>
    <property type="match status" value="1"/>
</dbReference>
<dbReference type="InterPro" id="IPR010838">
    <property type="entry name" value="DUF1444"/>
</dbReference>
<dbReference type="NCBIfam" id="NF010189">
    <property type="entry name" value="PRK13668.1"/>
    <property type="match status" value="1"/>
</dbReference>
<dbReference type="Pfam" id="PF07285">
    <property type="entry name" value="DUF1444"/>
    <property type="match status" value="1"/>
</dbReference>
<dbReference type="PIRSF" id="PIRSF012562">
    <property type="entry name" value="UCP012562"/>
    <property type="match status" value="1"/>
</dbReference>
<evidence type="ECO:0000255" key="1">
    <source>
        <dbReference type="HAMAP-Rule" id="MF_01548"/>
    </source>
</evidence>
<evidence type="ECO:0000305" key="2"/>